<dbReference type="EC" id="2.4.1.18" evidence="1"/>
<dbReference type="EMBL" id="AE016879">
    <property type="protein sequence ID" value="AAP28795.1"/>
    <property type="molecule type" value="Genomic_DNA"/>
</dbReference>
<dbReference type="EMBL" id="AE017334">
    <property type="protein sequence ID" value="AAT34251.2"/>
    <property type="molecule type" value="Genomic_DNA"/>
</dbReference>
<dbReference type="EMBL" id="AE017225">
    <property type="protein sequence ID" value="AAT57055.1"/>
    <property type="molecule type" value="Genomic_DNA"/>
</dbReference>
<dbReference type="RefSeq" id="NP_847309.1">
    <property type="nucleotide sequence ID" value="NC_003997.3"/>
</dbReference>
<dbReference type="RefSeq" id="WP_000111381.1">
    <property type="nucleotide sequence ID" value="NZ_WXXJ01000032.1"/>
</dbReference>
<dbReference type="RefSeq" id="YP_031005.1">
    <property type="nucleotide sequence ID" value="NC_005945.1"/>
</dbReference>
<dbReference type="SMR" id="Q81K82"/>
<dbReference type="IntAct" id="Q81K82">
    <property type="interactions" value="1"/>
</dbReference>
<dbReference type="STRING" id="261594.GBAA_5123"/>
<dbReference type="CAZy" id="CBM48">
    <property type="family name" value="Carbohydrate-Binding Module Family 48"/>
</dbReference>
<dbReference type="CAZy" id="GH13">
    <property type="family name" value="Glycoside Hydrolase Family 13"/>
</dbReference>
<dbReference type="DNASU" id="1084438"/>
<dbReference type="GeneID" id="45024728"/>
<dbReference type="KEGG" id="ban:BA_5123"/>
<dbReference type="KEGG" id="bar:GBAA_5123"/>
<dbReference type="KEGG" id="bat:BAS4761"/>
<dbReference type="PATRIC" id="fig|198094.11.peg.5084"/>
<dbReference type="eggNOG" id="COG0296">
    <property type="taxonomic scope" value="Bacteria"/>
</dbReference>
<dbReference type="HOGENOM" id="CLU_004245_4_0_9"/>
<dbReference type="OMA" id="YEMHLGS"/>
<dbReference type="OrthoDB" id="9800174at2"/>
<dbReference type="UniPathway" id="UPA00164"/>
<dbReference type="Proteomes" id="UP000000427">
    <property type="component" value="Chromosome"/>
</dbReference>
<dbReference type="Proteomes" id="UP000000594">
    <property type="component" value="Chromosome"/>
</dbReference>
<dbReference type="GO" id="GO:0005829">
    <property type="term" value="C:cytosol"/>
    <property type="evidence" value="ECO:0007669"/>
    <property type="project" value="TreeGrafter"/>
</dbReference>
<dbReference type="GO" id="GO:0003844">
    <property type="term" value="F:1,4-alpha-glucan branching enzyme activity"/>
    <property type="evidence" value="ECO:0007669"/>
    <property type="project" value="UniProtKB-UniRule"/>
</dbReference>
<dbReference type="GO" id="GO:0043169">
    <property type="term" value="F:cation binding"/>
    <property type="evidence" value="ECO:0007669"/>
    <property type="project" value="InterPro"/>
</dbReference>
<dbReference type="GO" id="GO:0004553">
    <property type="term" value="F:hydrolase activity, hydrolyzing O-glycosyl compounds"/>
    <property type="evidence" value="ECO:0007669"/>
    <property type="project" value="InterPro"/>
</dbReference>
<dbReference type="GO" id="GO:0005978">
    <property type="term" value="P:glycogen biosynthetic process"/>
    <property type="evidence" value="ECO:0007669"/>
    <property type="project" value="UniProtKB-UniRule"/>
</dbReference>
<dbReference type="CDD" id="cd11322">
    <property type="entry name" value="AmyAc_Glg_BE"/>
    <property type="match status" value="1"/>
</dbReference>
<dbReference type="CDD" id="cd02855">
    <property type="entry name" value="E_set_GBE_prok_N"/>
    <property type="match status" value="1"/>
</dbReference>
<dbReference type="FunFam" id="2.60.40.10:FF:000169">
    <property type="entry name" value="1,4-alpha-glucan branching enzyme GlgB"/>
    <property type="match status" value="1"/>
</dbReference>
<dbReference type="FunFam" id="2.60.40.1180:FF:000002">
    <property type="entry name" value="1,4-alpha-glucan branching enzyme GlgB"/>
    <property type="match status" value="1"/>
</dbReference>
<dbReference type="FunFam" id="3.20.20.80:FF:000003">
    <property type="entry name" value="1,4-alpha-glucan branching enzyme GlgB"/>
    <property type="match status" value="1"/>
</dbReference>
<dbReference type="Gene3D" id="3.20.20.80">
    <property type="entry name" value="Glycosidases"/>
    <property type="match status" value="1"/>
</dbReference>
<dbReference type="Gene3D" id="2.60.40.1180">
    <property type="entry name" value="Golgi alpha-mannosidase II"/>
    <property type="match status" value="1"/>
</dbReference>
<dbReference type="Gene3D" id="2.60.40.10">
    <property type="entry name" value="Immunoglobulins"/>
    <property type="match status" value="1"/>
</dbReference>
<dbReference type="HAMAP" id="MF_00685">
    <property type="entry name" value="GlgB"/>
    <property type="match status" value="1"/>
</dbReference>
<dbReference type="InterPro" id="IPR006048">
    <property type="entry name" value="A-amylase/branching_C"/>
</dbReference>
<dbReference type="InterPro" id="IPR037439">
    <property type="entry name" value="Branching_enzy"/>
</dbReference>
<dbReference type="InterPro" id="IPR006407">
    <property type="entry name" value="GlgB"/>
</dbReference>
<dbReference type="InterPro" id="IPR044143">
    <property type="entry name" value="GlgB_N_E_set_prok"/>
</dbReference>
<dbReference type="InterPro" id="IPR006047">
    <property type="entry name" value="Glyco_hydro_13_cat_dom"/>
</dbReference>
<dbReference type="InterPro" id="IPR004193">
    <property type="entry name" value="Glyco_hydro_13_N"/>
</dbReference>
<dbReference type="InterPro" id="IPR013780">
    <property type="entry name" value="Glyco_hydro_b"/>
</dbReference>
<dbReference type="InterPro" id="IPR017853">
    <property type="entry name" value="Glycoside_hydrolase_SF"/>
</dbReference>
<dbReference type="InterPro" id="IPR013783">
    <property type="entry name" value="Ig-like_fold"/>
</dbReference>
<dbReference type="NCBIfam" id="TIGR01515">
    <property type="entry name" value="branching_enzym"/>
    <property type="match status" value="1"/>
</dbReference>
<dbReference type="NCBIfam" id="NF003811">
    <property type="entry name" value="PRK05402.1"/>
    <property type="match status" value="1"/>
</dbReference>
<dbReference type="NCBIfam" id="NF008967">
    <property type="entry name" value="PRK12313.1"/>
    <property type="match status" value="1"/>
</dbReference>
<dbReference type="PANTHER" id="PTHR43651">
    <property type="entry name" value="1,4-ALPHA-GLUCAN-BRANCHING ENZYME"/>
    <property type="match status" value="1"/>
</dbReference>
<dbReference type="PANTHER" id="PTHR43651:SF3">
    <property type="entry name" value="1,4-ALPHA-GLUCAN-BRANCHING ENZYME"/>
    <property type="match status" value="1"/>
</dbReference>
<dbReference type="Pfam" id="PF00128">
    <property type="entry name" value="Alpha-amylase"/>
    <property type="match status" value="2"/>
</dbReference>
<dbReference type="Pfam" id="PF02806">
    <property type="entry name" value="Alpha-amylase_C"/>
    <property type="match status" value="1"/>
</dbReference>
<dbReference type="Pfam" id="PF02922">
    <property type="entry name" value="CBM_48"/>
    <property type="match status" value="1"/>
</dbReference>
<dbReference type="PIRSF" id="PIRSF000463">
    <property type="entry name" value="GlgB"/>
    <property type="match status" value="1"/>
</dbReference>
<dbReference type="SMART" id="SM00642">
    <property type="entry name" value="Aamy"/>
    <property type="match status" value="1"/>
</dbReference>
<dbReference type="SUPFAM" id="SSF51445">
    <property type="entry name" value="(Trans)glycosidases"/>
    <property type="match status" value="1"/>
</dbReference>
<dbReference type="SUPFAM" id="SSF51011">
    <property type="entry name" value="Glycosyl hydrolase domain"/>
    <property type="match status" value="1"/>
</dbReference>
<reference key="1">
    <citation type="journal article" date="2003" name="Nature">
        <title>The genome sequence of Bacillus anthracis Ames and comparison to closely related bacteria.</title>
        <authorList>
            <person name="Read T.D."/>
            <person name="Peterson S.N."/>
            <person name="Tourasse N.J."/>
            <person name="Baillie L.W."/>
            <person name="Paulsen I.T."/>
            <person name="Nelson K.E."/>
            <person name="Tettelin H."/>
            <person name="Fouts D.E."/>
            <person name="Eisen J.A."/>
            <person name="Gill S.R."/>
            <person name="Holtzapple E.K."/>
            <person name="Okstad O.A."/>
            <person name="Helgason E."/>
            <person name="Rilstone J."/>
            <person name="Wu M."/>
            <person name="Kolonay J.F."/>
            <person name="Beanan M.J."/>
            <person name="Dodson R.J."/>
            <person name="Brinkac L.M."/>
            <person name="Gwinn M.L."/>
            <person name="DeBoy R.T."/>
            <person name="Madpu R."/>
            <person name="Daugherty S.C."/>
            <person name="Durkin A.S."/>
            <person name="Haft D.H."/>
            <person name="Nelson W.C."/>
            <person name="Peterson J.D."/>
            <person name="Pop M."/>
            <person name="Khouri H.M."/>
            <person name="Radune D."/>
            <person name="Benton J.L."/>
            <person name="Mahamoud Y."/>
            <person name="Jiang L."/>
            <person name="Hance I.R."/>
            <person name="Weidman J.F."/>
            <person name="Berry K.J."/>
            <person name="Plaut R.D."/>
            <person name="Wolf A.M."/>
            <person name="Watkins K.L."/>
            <person name="Nierman W.C."/>
            <person name="Hazen A."/>
            <person name="Cline R.T."/>
            <person name="Redmond C."/>
            <person name="Thwaite J.E."/>
            <person name="White O."/>
            <person name="Salzberg S.L."/>
            <person name="Thomason B."/>
            <person name="Friedlander A.M."/>
            <person name="Koehler T.M."/>
            <person name="Hanna P.C."/>
            <person name="Kolstoe A.-B."/>
            <person name="Fraser C.M."/>
        </authorList>
    </citation>
    <scope>NUCLEOTIDE SEQUENCE [LARGE SCALE GENOMIC DNA]</scope>
    <source>
        <strain>Ames / isolate Porton</strain>
    </source>
</reference>
<reference key="2">
    <citation type="journal article" date="2009" name="J. Bacteriol.">
        <title>The complete genome sequence of Bacillus anthracis Ames 'Ancestor'.</title>
        <authorList>
            <person name="Ravel J."/>
            <person name="Jiang L."/>
            <person name="Stanley S.T."/>
            <person name="Wilson M.R."/>
            <person name="Decker R.S."/>
            <person name="Read T.D."/>
            <person name="Worsham P."/>
            <person name="Keim P.S."/>
            <person name="Salzberg S.L."/>
            <person name="Fraser-Liggett C.M."/>
            <person name="Rasko D.A."/>
        </authorList>
    </citation>
    <scope>NUCLEOTIDE SEQUENCE [LARGE SCALE GENOMIC DNA]</scope>
    <source>
        <strain>Ames ancestor</strain>
    </source>
</reference>
<reference key="3">
    <citation type="submission" date="2004-01" db="EMBL/GenBank/DDBJ databases">
        <title>Complete genome sequence of Bacillus anthracis Sterne.</title>
        <authorList>
            <person name="Brettin T.S."/>
            <person name="Bruce D."/>
            <person name="Challacombe J.F."/>
            <person name="Gilna P."/>
            <person name="Han C."/>
            <person name="Hill K."/>
            <person name="Hitchcock P."/>
            <person name="Jackson P."/>
            <person name="Keim P."/>
            <person name="Longmire J."/>
            <person name="Lucas S."/>
            <person name="Okinaka R."/>
            <person name="Richardson P."/>
            <person name="Rubin E."/>
            <person name="Tice H."/>
        </authorList>
    </citation>
    <scope>NUCLEOTIDE SEQUENCE [LARGE SCALE GENOMIC DNA]</scope>
    <source>
        <strain>Sterne</strain>
    </source>
</reference>
<organism>
    <name type="scientific">Bacillus anthracis</name>
    <dbReference type="NCBI Taxonomy" id="1392"/>
    <lineage>
        <taxon>Bacteria</taxon>
        <taxon>Bacillati</taxon>
        <taxon>Bacillota</taxon>
        <taxon>Bacilli</taxon>
        <taxon>Bacillales</taxon>
        <taxon>Bacillaceae</taxon>
        <taxon>Bacillus</taxon>
        <taxon>Bacillus cereus group</taxon>
    </lineage>
</organism>
<feature type="chain" id="PRO_0000188675" description="1,4-alpha-glucan branching enzyme GlgB">
    <location>
        <begin position="1"/>
        <end position="645"/>
    </location>
</feature>
<feature type="region of interest" description="Disordered" evidence="2">
    <location>
        <begin position="619"/>
        <end position="645"/>
    </location>
</feature>
<feature type="compositionally biased region" description="Polar residues" evidence="2">
    <location>
        <begin position="636"/>
        <end position="645"/>
    </location>
</feature>
<feature type="active site" description="Nucleophile" evidence="1">
    <location>
        <position position="309"/>
    </location>
</feature>
<feature type="active site" description="Proton donor" evidence="1">
    <location>
        <position position="352"/>
    </location>
</feature>
<proteinExistence type="inferred from homology"/>
<sequence>MSVINCEEVKRDEFHTEKYYESYNIFGAHIVTEDEMRGVRFTVWAPHAKAMSVVGDFNEWDYEQHKMLQVTEEGIWSLFIPHIEEREIYKYAIETMAGDVIFKADPYAVYAEVRPNTASVVFDIKGYEWNDKNWSRKKKKKSVYKEAMTVYELHFGSWKKKEDGTLYSYREMAEELIPYVVEHQFTHIEIMPLVEHPYDRSWGYQGTGYYAATSRFGTPHDLMHFVDECHKYGIGVILDWVPGHFCKDAHGLYLFDGTPTYEYKDKDVQENPVWGTVNFDLGKREVRNFLISNALFWMRYFHIDGFRVDAVANMLYWNKEGQEQSNEHAVSFLRELNEAVFAEDEDFLMTAEDSTAWPLVTAPTYEGGLGFNYKWNMGWMNDVLKYMECAPEYRKYIHDKMTFSLLYAYSENFILPLSHDEVVHGKKSLLNKMPGDYWDKFAQLRLLYGYFFTHPGKKLLFMGGEFGQFDEWKDLEDLDWNLHDFEMHRYMHDYFKELIALYKRSKPLWQLDHSREGFQWIDANNNEQSIFSFIRQGDKQEDALVVVCNFTKATYENYKVGVPDFEYYNEVLNSDAEQYGGSGQVNKKRLKTFQEPYHNQTAHVEITIPPFGVSILRPVKTRKGSKKQDGSKTKVRSNVTSRGKR</sequence>
<accession>Q81K82</accession>
<accession>Q6HRN3</accession>
<accession>Q6KKZ9</accession>
<comment type="function">
    <text evidence="1">Catalyzes the formation of the alpha-1,6-glucosidic linkages in glycogen by scission of a 1,4-alpha-linked oligosaccharide from growing alpha-1,4-glucan chains and the subsequent attachment of the oligosaccharide to the alpha-1,6 position.</text>
</comment>
<comment type="catalytic activity">
    <reaction evidence="1">
        <text>Transfers a segment of a (1-&gt;4)-alpha-D-glucan chain to a primary hydroxy group in a similar glucan chain.</text>
        <dbReference type="EC" id="2.4.1.18"/>
    </reaction>
</comment>
<comment type="pathway">
    <text evidence="1">Glycan biosynthesis; glycogen biosynthesis.</text>
</comment>
<comment type="subunit">
    <text evidence="1">Monomer.</text>
</comment>
<comment type="similarity">
    <text evidence="1">Belongs to the glycosyl hydrolase 13 family. GlgB subfamily.</text>
</comment>
<keyword id="KW-0119">Carbohydrate metabolism</keyword>
<keyword id="KW-0320">Glycogen biosynthesis</keyword>
<keyword id="KW-0321">Glycogen metabolism</keyword>
<keyword id="KW-0328">Glycosyltransferase</keyword>
<keyword id="KW-1185">Reference proteome</keyword>
<keyword id="KW-0808">Transferase</keyword>
<gene>
    <name evidence="1" type="primary">glgB</name>
    <name type="ordered locus">BA_5123</name>
    <name type="ordered locus">GBAA_5123</name>
    <name type="ordered locus">BAS4761</name>
</gene>
<name>GLGB_BACAN</name>
<protein>
    <recommendedName>
        <fullName evidence="1">1,4-alpha-glucan branching enzyme GlgB</fullName>
        <ecNumber evidence="1">2.4.1.18</ecNumber>
    </recommendedName>
    <alternativeName>
        <fullName evidence="1">1,4-alpha-D-glucan:1,4-alpha-D-glucan 6-glucosyl-transferase</fullName>
    </alternativeName>
    <alternativeName>
        <fullName evidence="1">Alpha-(1-&gt;4)-glucan branching enzyme</fullName>
    </alternativeName>
    <alternativeName>
        <fullName evidence="1">Glycogen branching enzyme</fullName>
        <shortName evidence="1">BE</shortName>
    </alternativeName>
</protein>
<evidence type="ECO:0000255" key="1">
    <source>
        <dbReference type="HAMAP-Rule" id="MF_00685"/>
    </source>
</evidence>
<evidence type="ECO:0000256" key="2">
    <source>
        <dbReference type="SAM" id="MobiDB-lite"/>
    </source>
</evidence>